<dbReference type="EMBL" id="L77117">
    <property type="protein sequence ID" value="AAB98788.1"/>
    <property type="molecule type" value="Genomic_DNA"/>
</dbReference>
<dbReference type="PIR" id="E64398">
    <property type="entry name" value="E64398"/>
</dbReference>
<dbReference type="RefSeq" id="WP_010870296.1">
    <property type="nucleotide sequence ID" value="NC_000909.1"/>
</dbReference>
<dbReference type="SMR" id="Q58199"/>
<dbReference type="STRING" id="243232.MJ_0789"/>
<dbReference type="PaxDb" id="243232-MJ_0789"/>
<dbReference type="EnsemblBacteria" id="AAB98788">
    <property type="protein sequence ID" value="AAB98788"/>
    <property type="gene ID" value="MJ_0789"/>
</dbReference>
<dbReference type="GeneID" id="1451668"/>
<dbReference type="KEGG" id="mja:MJ_0789"/>
<dbReference type="eggNOG" id="arCOG05051">
    <property type="taxonomic scope" value="Archaea"/>
</dbReference>
<dbReference type="HOGENOM" id="CLU_161126_0_0_2"/>
<dbReference type="InParanoid" id="Q58199"/>
<dbReference type="OrthoDB" id="65598at2157"/>
<dbReference type="Proteomes" id="UP000000805">
    <property type="component" value="Chromosome"/>
</dbReference>
<dbReference type="InterPro" id="IPR019270">
    <property type="entry name" value="DUF2283"/>
</dbReference>
<dbReference type="PANTHER" id="PTHR37029">
    <property type="entry name" value="SSR1768 PROTEIN"/>
    <property type="match status" value="1"/>
</dbReference>
<dbReference type="PANTHER" id="PTHR37029:SF1">
    <property type="entry name" value="SSR1768 PROTEIN"/>
    <property type="match status" value="1"/>
</dbReference>
<dbReference type="Pfam" id="PF10049">
    <property type="entry name" value="DUF2283"/>
    <property type="match status" value="1"/>
</dbReference>
<name>Y789_METJA</name>
<gene>
    <name type="ordered locus">MJ0789</name>
</gene>
<sequence length="116" mass="13203">MKVKIDYDYENDNLLVYKEGAKSKKTLDLDDILIDFDENGDVVGIEILNASKLFNVDKYDLLKNLIKFEAVGKITKDLITLNIKLYLLRRKKEIIKESVVKGLNTIGLKEGEVVIG</sequence>
<organism>
    <name type="scientific">Methanocaldococcus jannaschii (strain ATCC 43067 / DSM 2661 / JAL-1 / JCM 10045 / NBRC 100440)</name>
    <name type="common">Methanococcus jannaschii</name>
    <dbReference type="NCBI Taxonomy" id="243232"/>
    <lineage>
        <taxon>Archaea</taxon>
        <taxon>Methanobacteriati</taxon>
        <taxon>Methanobacteriota</taxon>
        <taxon>Methanomada group</taxon>
        <taxon>Methanococci</taxon>
        <taxon>Methanococcales</taxon>
        <taxon>Methanocaldococcaceae</taxon>
        <taxon>Methanocaldococcus</taxon>
    </lineage>
</organism>
<proteinExistence type="predicted"/>
<accession>Q58199</accession>
<feature type="chain" id="PRO_0000107040" description="Uncharacterized protein MJ0789">
    <location>
        <begin position="1"/>
        <end position="116"/>
    </location>
</feature>
<protein>
    <recommendedName>
        <fullName>Uncharacterized protein MJ0789</fullName>
    </recommendedName>
</protein>
<reference key="1">
    <citation type="journal article" date="1996" name="Science">
        <title>Complete genome sequence of the methanogenic archaeon, Methanococcus jannaschii.</title>
        <authorList>
            <person name="Bult C.J."/>
            <person name="White O."/>
            <person name="Olsen G.J."/>
            <person name="Zhou L."/>
            <person name="Fleischmann R.D."/>
            <person name="Sutton G.G."/>
            <person name="Blake J.A."/>
            <person name="FitzGerald L.M."/>
            <person name="Clayton R.A."/>
            <person name="Gocayne J.D."/>
            <person name="Kerlavage A.R."/>
            <person name="Dougherty B.A."/>
            <person name="Tomb J.-F."/>
            <person name="Adams M.D."/>
            <person name="Reich C.I."/>
            <person name="Overbeek R."/>
            <person name="Kirkness E.F."/>
            <person name="Weinstock K.G."/>
            <person name="Merrick J.M."/>
            <person name="Glodek A."/>
            <person name="Scott J.L."/>
            <person name="Geoghagen N.S.M."/>
            <person name="Weidman J.F."/>
            <person name="Fuhrmann J.L."/>
            <person name="Nguyen D."/>
            <person name="Utterback T.R."/>
            <person name="Kelley J.M."/>
            <person name="Peterson J.D."/>
            <person name="Sadow P.W."/>
            <person name="Hanna M.C."/>
            <person name="Cotton M.D."/>
            <person name="Roberts K.M."/>
            <person name="Hurst M.A."/>
            <person name="Kaine B.P."/>
            <person name="Borodovsky M."/>
            <person name="Klenk H.-P."/>
            <person name="Fraser C.M."/>
            <person name="Smith H.O."/>
            <person name="Woese C.R."/>
            <person name="Venter J.C."/>
        </authorList>
    </citation>
    <scope>NUCLEOTIDE SEQUENCE [LARGE SCALE GENOMIC DNA]</scope>
    <source>
        <strain>ATCC 43067 / DSM 2661 / JAL-1 / JCM 10045 / NBRC 100440</strain>
    </source>
</reference>
<keyword id="KW-1185">Reference proteome</keyword>